<organism>
    <name type="scientific">Homo sapiens</name>
    <name type="common">Human</name>
    <dbReference type="NCBI Taxonomy" id="9606"/>
    <lineage>
        <taxon>Eukaryota</taxon>
        <taxon>Metazoa</taxon>
        <taxon>Chordata</taxon>
        <taxon>Craniata</taxon>
        <taxon>Vertebrata</taxon>
        <taxon>Euteleostomi</taxon>
        <taxon>Mammalia</taxon>
        <taxon>Eutheria</taxon>
        <taxon>Euarchontoglires</taxon>
        <taxon>Primates</taxon>
        <taxon>Haplorrhini</taxon>
        <taxon>Catarrhini</taxon>
        <taxon>Hominidae</taxon>
        <taxon>Homo</taxon>
    </lineage>
</organism>
<reference key="1">
    <citation type="journal article" date="2003" name="J. Invest. Dermatol.">
        <title>K6irs1, K6irs2, K6irs3, and K6irs4 represent the inner-root-sheath-specific type II epithelial keratins of the human hair follicle.</title>
        <authorList>
            <person name="Langbein L."/>
            <person name="Rogers M.A."/>
            <person name="Praetzel S."/>
            <person name="Winter H."/>
            <person name="Schweizer J."/>
        </authorList>
    </citation>
    <scope>NUCLEOTIDE SEQUENCE [MRNA]</scope>
    <scope>TISSUE SPECIFICITY</scope>
    <scope>VARIANT ASP-271</scope>
    <source>
        <tissue>Scalp</tissue>
    </source>
</reference>
<reference key="2">
    <citation type="journal article" date="2006" name="Nature">
        <title>The finished DNA sequence of human chromosome 12.</title>
        <authorList>
            <person name="Scherer S.E."/>
            <person name="Muzny D.M."/>
            <person name="Buhay C.J."/>
            <person name="Chen R."/>
            <person name="Cree A."/>
            <person name="Ding Y."/>
            <person name="Dugan-Rocha S."/>
            <person name="Gill R."/>
            <person name="Gunaratne P."/>
            <person name="Harris R.A."/>
            <person name="Hawes A.C."/>
            <person name="Hernandez J."/>
            <person name="Hodgson A.V."/>
            <person name="Hume J."/>
            <person name="Jackson A."/>
            <person name="Khan Z.M."/>
            <person name="Kovar-Smith C."/>
            <person name="Lewis L.R."/>
            <person name="Lozado R.J."/>
            <person name="Metzker M.L."/>
            <person name="Milosavljevic A."/>
            <person name="Miner G.R."/>
            <person name="Montgomery K.T."/>
            <person name="Morgan M.B."/>
            <person name="Nazareth L.V."/>
            <person name="Scott G."/>
            <person name="Sodergren E."/>
            <person name="Song X.-Z."/>
            <person name="Steffen D."/>
            <person name="Lovering R.C."/>
            <person name="Wheeler D.A."/>
            <person name="Worley K.C."/>
            <person name="Yuan Y."/>
            <person name="Zhang Z."/>
            <person name="Adams C.Q."/>
            <person name="Ansari-Lari M.A."/>
            <person name="Ayele M."/>
            <person name="Brown M.J."/>
            <person name="Chen G."/>
            <person name="Chen Z."/>
            <person name="Clerc-Blankenburg K.P."/>
            <person name="Davis C."/>
            <person name="Delgado O."/>
            <person name="Dinh H.H."/>
            <person name="Draper H."/>
            <person name="Gonzalez-Garay M.L."/>
            <person name="Havlak P."/>
            <person name="Jackson L.R."/>
            <person name="Jacob L.S."/>
            <person name="Kelly S.H."/>
            <person name="Li L."/>
            <person name="Li Z."/>
            <person name="Liu J."/>
            <person name="Liu W."/>
            <person name="Lu J."/>
            <person name="Maheshwari M."/>
            <person name="Nguyen B.-V."/>
            <person name="Okwuonu G.O."/>
            <person name="Pasternak S."/>
            <person name="Perez L.M."/>
            <person name="Plopper F.J.H."/>
            <person name="Santibanez J."/>
            <person name="Shen H."/>
            <person name="Tabor P.E."/>
            <person name="Verduzco D."/>
            <person name="Waldron L."/>
            <person name="Wang Q."/>
            <person name="Williams G.A."/>
            <person name="Zhang J."/>
            <person name="Zhou J."/>
            <person name="Allen C.C."/>
            <person name="Amin A.G."/>
            <person name="Anyalebechi V."/>
            <person name="Bailey M."/>
            <person name="Barbaria J.A."/>
            <person name="Bimage K.E."/>
            <person name="Bryant N.P."/>
            <person name="Burch P.E."/>
            <person name="Burkett C.E."/>
            <person name="Burrell K.L."/>
            <person name="Calderon E."/>
            <person name="Cardenas V."/>
            <person name="Carter K."/>
            <person name="Casias K."/>
            <person name="Cavazos I."/>
            <person name="Cavazos S.R."/>
            <person name="Ceasar H."/>
            <person name="Chacko J."/>
            <person name="Chan S.N."/>
            <person name="Chavez D."/>
            <person name="Christopoulos C."/>
            <person name="Chu J."/>
            <person name="Cockrell R."/>
            <person name="Cox C.D."/>
            <person name="Dang M."/>
            <person name="Dathorne S.R."/>
            <person name="David R."/>
            <person name="Davis C.M."/>
            <person name="Davy-Carroll L."/>
            <person name="Deshazo D.R."/>
            <person name="Donlin J.E."/>
            <person name="D'Souza L."/>
            <person name="Eaves K.A."/>
            <person name="Egan A."/>
            <person name="Emery-Cohen A.J."/>
            <person name="Escotto M."/>
            <person name="Flagg N."/>
            <person name="Forbes L.D."/>
            <person name="Gabisi A.M."/>
            <person name="Garza M."/>
            <person name="Hamilton C."/>
            <person name="Henderson N."/>
            <person name="Hernandez O."/>
            <person name="Hines S."/>
            <person name="Hogues M.E."/>
            <person name="Huang M."/>
            <person name="Idlebird D.G."/>
            <person name="Johnson R."/>
            <person name="Jolivet A."/>
            <person name="Jones S."/>
            <person name="Kagan R."/>
            <person name="King L.M."/>
            <person name="Leal B."/>
            <person name="Lebow H."/>
            <person name="Lee S."/>
            <person name="LeVan J.M."/>
            <person name="Lewis L.C."/>
            <person name="London P."/>
            <person name="Lorensuhewa L.M."/>
            <person name="Loulseged H."/>
            <person name="Lovett D.A."/>
            <person name="Lucier A."/>
            <person name="Lucier R.L."/>
            <person name="Ma J."/>
            <person name="Madu R.C."/>
            <person name="Mapua P."/>
            <person name="Martindale A.D."/>
            <person name="Martinez E."/>
            <person name="Massey E."/>
            <person name="Mawhiney S."/>
            <person name="Meador M.G."/>
            <person name="Mendez S."/>
            <person name="Mercado C."/>
            <person name="Mercado I.C."/>
            <person name="Merritt C.E."/>
            <person name="Miner Z.L."/>
            <person name="Minja E."/>
            <person name="Mitchell T."/>
            <person name="Mohabbat F."/>
            <person name="Mohabbat K."/>
            <person name="Montgomery B."/>
            <person name="Moore N."/>
            <person name="Morris S."/>
            <person name="Munidasa M."/>
            <person name="Ngo R.N."/>
            <person name="Nguyen N.B."/>
            <person name="Nickerson E."/>
            <person name="Nwaokelemeh O.O."/>
            <person name="Nwokenkwo S."/>
            <person name="Obregon M."/>
            <person name="Oguh M."/>
            <person name="Oragunye N."/>
            <person name="Oviedo R.J."/>
            <person name="Parish B.J."/>
            <person name="Parker D.N."/>
            <person name="Parrish J."/>
            <person name="Parks K.L."/>
            <person name="Paul H.A."/>
            <person name="Payton B.A."/>
            <person name="Perez A."/>
            <person name="Perrin W."/>
            <person name="Pickens A."/>
            <person name="Primus E.L."/>
            <person name="Pu L.-L."/>
            <person name="Puazo M."/>
            <person name="Quiles M.M."/>
            <person name="Quiroz J.B."/>
            <person name="Rabata D."/>
            <person name="Reeves K."/>
            <person name="Ruiz S.J."/>
            <person name="Shao H."/>
            <person name="Sisson I."/>
            <person name="Sonaike T."/>
            <person name="Sorelle R.P."/>
            <person name="Sutton A.E."/>
            <person name="Svatek A.F."/>
            <person name="Svetz L.A."/>
            <person name="Tamerisa K.S."/>
            <person name="Taylor T.R."/>
            <person name="Teague B."/>
            <person name="Thomas N."/>
            <person name="Thorn R.D."/>
            <person name="Trejos Z.Y."/>
            <person name="Trevino B.K."/>
            <person name="Ukegbu O.N."/>
            <person name="Urban J.B."/>
            <person name="Vasquez L.I."/>
            <person name="Vera V.A."/>
            <person name="Villasana D.M."/>
            <person name="Wang L."/>
            <person name="Ward-Moore S."/>
            <person name="Warren J.T."/>
            <person name="Wei X."/>
            <person name="White F."/>
            <person name="Williamson A.L."/>
            <person name="Wleczyk R."/>
            <person name="Wooden H.S."/>
            <person name="Wooden S.H."/>
            <person name="Yen J."/>
            <person name="Yoon L."/>
            <person name="Yoon V."/>
            <person name="Zorrilla S.E."/>
            <person name="Nelson D."/>
            <person name="Kucherlapati R."/>
            <person name="Weinstock G."/>
            <person name="Gibbs R.A."/>
        </authorList>
    </citation>
    <scope>NUCLEOTIDE SEQUENCE [LARGE SCALE GENOMIC DNA]</scope>
</reference>
<reference key="3">
    <citation type="submission" date="2005-07" db="EMBL/GenBank/DDBJ databases">
        <authorList>
            <person name="Mural R.J."/>
            <person name="Istrail S."/>
            <person name="Sutton G.G."/>
            <person name="Florea L."/>
            <person name="Halpern A.L."/>
            <person name="Mobarry C.M."/>
            <person name="Lippert R."/>
            <person name="Walenz B."/>
            <person name="Shatkay H."/>
            <person name="Dew I."/>
            <person name="Miller J.R."/>
            <person name="Flanigan M.J."/>
            <person name="Edwards N.J."/>
            <person name="Bolanos R."/>
            <person name="Fasulo D."/>
            <person name="Halldorsson B.V."/>
            <person name="Hannenhalli S."/>
            <person name="Turner R."/>
            <person name="Yooseph S."/>
            <person name="Lu F."/>
            <person name="Nusskern D.R."/>
            <person name="Shue B.C."/>
            <person name="Zheng X.H."/>
            <person name="Zhong F."/>
            <person name="Delcher A.L."/>
            <person name="Huson D.H."/>
            <person name="Kravitz S.A."/>
            <person name="Mouchard L."/>
            <person name="Reinert K."/>
            <person name="Remington K.A."/>
            <person name="Clark A.G."/>
            <person name="Waterman M.S."/>
            <person name="Eichler E.E."/>
            <person name="Adams M.D."/>
            <person name="Hunkapiller M.W."/>
            <person name="Myers E.W."/>
            <person name="Venter J.C."/>
        </authorList>
    </citation>
    <scope>NUCLEOTIDE SEQUENCE [LARGE SCALE GENOMIC DNA]</scope>
</reference>
<reference key="4">
    <citation type="journal article" date="2001" name="J. Cell Sci.">
        <title>Genes for intermediate filament proteins and the draft sequence of the human genome: novel keratin genes and a surprisingly high number of pseudogenes related to keratin genes 8 and 18.</title>
        <authorList>
            <person name="Hesse M."/>
            <person name="Magin T.M."/>
            <person name="Weber K."/>
        </authorList>
    </citation>
    <scope>IDENTIFICATION</scope>
    <scope>VARIANT ASP-271</scope>
</reference>
<reference key="5">
    <citation type="journal article" date="2006" name="J. Invest. Dermatol.">
        <title>K25 (K25irs1), K26 (K25irs2), K27 (K25irs3), and K28 (K25irs4) represent the type I inner root sheath keratins of the human hair follicle.</title>
        <authorList>
            <person name="Langbein L."/>
            <person name="Rogers M.A."/>
            <person name="Praetzel-Wunder S."/>
            <person name="Helmke B."/>
            <person name="Schirmacher P."/>
            <person name="Schweizer J."/>
        </authorList>
    </citation>
    <scope>TISSUE SPECIFICITY</scope>
</reference>
<reference key="6">
    <citation type="journal article" date="2010" name="Sci. Signal.">
        <title>Quantitative phosphoproteomics reveals widespread full phosphorylation site occupancy during mitosis.</title>
        <authorList>
            <person name="Olsen J.V."/>
            <person name="Vermeulen M."/>
            <person name="Santamaria A."/>
            <person name="Kumar C."/>
            <person name="Miller M.L."/>
            <person name="Jensen L.J."/>
            <person name="Gnad F."/>
            <person name="Cox J."/>
            <person name="Jensen T.S."/>
            <person name="Nigg E.A."/>
            <person name="Brunak S."/>
            <person name="Mann M."/>
        </authorList>
    </citation>
    <scope>PHOSPHORYLATION [LARGE SCALE ANALYSIS] AT THR-513</scope>
    <scope>IDENTIFICATION BY MASS SPECTROMETRY [LARGE SCALE ANALYSIS]</scope>
    <source>
        <tissue>Cervix carcinoma</tissue>
    </source>
</reference>
<reference key="7">
    <citation type="journal article" date="2010" name="Am. J. Hum. Genet.">
        <title>Autosomal-dominant woolly hair resulting from disruption of keratin 74 (KRT74), a potential determinant of human hair texture.</title>
        <authorList>
            <person name="Shimomura Y."/>
            <person name="Wajid M."/>
            <person name="Petukhova L."/>
            <person name="Kurban M."/>
            <person name="Christiano A.M."/>
        </authorList>
    </citation>
    <scope>VARIANT ADWH LYS-148</scope>
    <scope>CHARACTERIZATION OF VARIANT ADWH LYS-148</scope>
</reference>
<reference key="8">
    <citation type="journal article" date="2011" name="Hum. Genet.">
        <title>Novel mutations in the keratin-74 (KRT74) gene underlie autosomal dominant woolly hair/hypotrichosis in Pakistani families.</title>
        <authorList>
            <person name="Wasif N."/>
            <person name="Naqvi S.K."/>
            <person name="Basit S."/>
            <person name="Ali N."/>
            <person name="Ansar M."/>
            <person name="Ahmad W."/>
        </authorList>
    </citation>
    <scope>VARIANT HYPT3 ASN-482</scope>
</reference>
<reference key="9">
    <citation type="journal article" date="2014" name="PLoS ONE">
        <title>Autosomal recessive transmission of a rare KRT74 variant causes hair and nail ectodermal dysplasia: allelism with dominant woolly hair/hypotrichosis.</title>
        <authorList>
            <person name="Raykova D."/>
            <person name="Klar J."/>
            <person name="Azhar A."/>
            <person name="Khan T.N."/>
            <person name="Malik N.A."/>
            <person name="Iqbal M."/>
            <person name="Tariq M."/>
            <person name="Baig S.M."/>
            <person name="Dahl N."/>
        </authorList>
    </citation>
    <scope>INVOLVEMENT IN ECTD7</scope>
    <scope>VARIANT ECTD7 SER-274</scope>
    <scope>TISSUE SPECIFICITY</scope>
</reference>
<sequence>MSRQLNIKSSGDKGNFSVHSAVVPRKAVGSLASYCAAGRGAGAGFGSRSLYSLGGNRRISFNVAGGGVRAGGYGFRPGSGYGGGRASGFAGSMFGSVALGPACLSVCPPGGIHQVTVNKSLLAPLNVELDPEIQKVRAQEREQIKVLNDKFASFIDKVRFLEQQNQVLETKWELLQQLDLNNCKKNLEPILEGYISNLRKQLETLSGDRVRLDSELRSMRDLVEDYKKRYEVEINRRTTAENEFVVLKKDADAAYAVKVELQAKVDSLDKEIKFLKCLYDAEIAQIQTHASETSVILSMDNNRDLDLDSIIAEVRMHYEEIALKSKAEAEALYQTKIQELQLAASRHGDDLKHTRSEMVELNRLIQRIRCEIGNVKKQRASLETAIADAEQRGDNALKDAQAKLDELEGALHQAKEELARMLREYQELMSLKLALDMEIATYRKLLEGEECRMSGENPSSVSISVISSSSYSYHHPSSAGVDLGASAVAGSSGSTQSGQTKTTEARGGDLKDTQGKSTPASIPARKATR</sequence>
<keyword id="KW-0175">Coiled coil</keyword>
<keyword id="KW-0225">Disease variant</keyword>
<keyword id="KW-0038">Ectodermal dysplasia</keyword>
<keyword id="KW-1063">Hypotrichosis</keyword>
<keyword id="KW-0403">Intermediate filament</keyword>
<keyword id="KW-0416">Keratin</keyword>
<keyword id="KW-0597">Phosphoprotein</keyword>
<keyword id="KW-1267">Proteomics identification</keyword>
<keyword id="KW-1185">Reference proteome</keyword>
<protein>
    <recommendedName>
        <fullName>Keratin, type II cytoskeletal 74</fullName>
    </recommendedName>
    <alternativeName>
        <fullName>Cytokeratin-74</fullName>
        <shortName>CK-74</shortName>
    </alternativeName>
    <alternativeName>
        <fullName>Keratin-5c</fullName>
        <shortName>K5C</shortName>
    </alternativeName>
    <alternativeName>
        <fullName>Keratin-74</fullName>
        <shortName>K74</shortName>
    </alternativeName>
    <alternativeName>
        <fullName>Type II inner root sheath-specific keratin-K6irs4</fullName>
    </alternativeName>
    <alternativeName>
        <fullName>Type-II keratin Kb37</fullName>
    </alternativeName>
</protein>
<dbReference type="EMBL" id="AJ508777">
    <property type="protein sequence ID" value="CAD48514.1"/>
    <property type="molecule type" value="mRNA"/>
</dbReference>
<dbReference type="EMBL" id="AC055715">
    <property type="status" value="NOT_ANNOTATED_CDS"/>
    <property type="molecule type" value="Genomic_DNA"/>
</dbReference>
<dbReference type="EMBL" id="CH471054">
    <property type="protein sequence ID" value="EAW96637.1"/>
    <property type="molecule type" value="Genomic_DNA"/>
</dbReference>
<dbReference type="EMBL" id="BK000977">
    <property type="protein sequence ID" value="DAA00404.1"/>
    <property type="status" value="ALT_SEQ"/>
    <property type="molecule type" value="Genomic_DNA"/>
</dbReference>
<dbReference type="CCDS" id="CCDS8832.1"/>
<dbReference type="RefSeq" id="NP_778223.2">
    <property type="nucleotide sequence ID" value="NM_175053.4"/>
</dbReference>
<dbReference type="SMR" id="Q7RTS7"/>
<dbReference type="BioGRID" id="125727">
    <property type="interactions" value="37"/>
</dbReference>
<dbReference type="FunCoup" id="Q7RTS7">
    <property type="interactions" value="165"/>
</dbReference>
<dbReference type="IntAct" id="Q7RTS7">
    <property type="interactions" value="18"/>
</dbReference>
<dbReference type="STRING" id="9606.ENSP00000307240"/>
<dbReference type="GlyGen" id="Q7RTS7">
    <property type="glycosylation" value="1 site, 1 O-linked glycan (1 site)"/>
</dbReference>
<dbReference type="iPTMnet" id="Q7RTS7"/>
<dbReference type="PhosphoSitePlus" id="Q7RTS7"/>
<dbReference type="SwissPalm" id="Q7RTS7"/>
<dbReference type="BioMuta" id="KRT74"/>
<dbReference type="DMDM" id="166218812"/>
<dbReference type="jPOST" id="Q7RTS7"/>
<dbReference type="MassIVE" id="Q7RTS7"/>
<dbReference type="PaxDb" id="9606-ENSP00000307240"/>
<dbReference type="PeptideAtlas" id="Q7RTS7"/>
<dbReference type="PRIDE" id="Q7RTS7"/>
<dbReference type="ProteomicsDB" id="68895"/>
<dbReference type="Antibodypedia" id="56742">
    <property type="antibodies" value="47 antibodies from 15 providers"/>
</dbReference>
<dbReference type="DNASU" id="121391"/>
<dbReference type="Ensembl" id="ENST00000305620.3">
    <property type="protein sequence ID" value="ENSP00000307240.2"/>
    <property type="gene ID" value="ENSG00000170484.10"/>
</dbReference>
<dbReference type="GeneID" id="121391"/>
<dbReference type="KEGG" id="hsa:121391"/>
<dbReference type="MANE-Select" id="ENST00000305620.3">
    <property type="protein sequence ID" value="ENSP00000307240.2"/>
    <property type="RefSeq nucleotide sequence ID" value="NM_175053.4"/>
    <property type="RefSeq protein sequence ID" value="NP_778223.2"/>
</dbReference>
<dbReference type="UCSC" id="uc001sap.1">
    <property type="organism name" value="human"/>
</dbReference>
<dbReference type="AGR" id="HGNC:28929"/>
<dbReference type="CTD" id="121391"/>
<dbReference type="DisGeNET" id="121391"/>
<dbReference type="GeneCards" id="KRT74"/>
<dbReference type="HGNC" id="HGNC:28929">
    <property type="gene designation" value="KRT74"/>
</dbReference>
<dbReference type="HPA" id="ENSG00000170484">
    <property type="expression patterns" value="Group enriched (epididymis, skin)"/>
</dbReference>
<dbReference type="MalaCards" id="KRT74"/>
<dbReference type="MIM" id="194300">
    <property type="type" value="phenotype"/>
</dbReference>
<dbReference type="MIM" id="608248">
    <property type="type" value="gene"/>
</dbReference>
<dbReference type="MIM" id="613981">
    <property type="type" value="phenotype"/>
</dbReference>
<dbReference type="MIM" id="614929">
    <property type="type" value="phenotype"/>
</dbReference>
<dbReference type="neXtProt" id="NX_Q7RTS7"/>
<dbReference type="OpenTargets" id="ENSG00000170484"/>
<dbReference type="Orphanet" id="90368">
    <property type="disease" value="Hypotrichosis simplex of the scalp"/>
</dbReference>
<dbReference type="Orphanet" id="69084">
    <property type="disease" value="Pure hair and nail ectodermal dysplasia"/>
</dbReference>
<dbReference type="Orphanet" id="170">
    <property type="disease" value="Woolly hair"/>
</dbReference>
<dbReference type="PharmGKB" id="PA147357741"/>
<dbReference type="VEuPathDB" id="HostDB:ENSG00000170484"/>
<dbReference type="eggNOG" id="ENOG502RNQG">
    <property type="taxonomic scope" value="Eukaryota"/>
</dbReference>
<dbReference type="GeneTree" id="ENSGT00940000162774"/>
<dbReference type="InParanoid" id="Q7RTS7"/>
<dbReference type="OrthoDB" id="2441647at2759"/>
<dbReference type="PAN-GO" id="Q7RTS7">
    <property type="GO annotations" value="4 GO annotations based on evolutionary models"/>
</dbReference>
<dbReference type="PhylomeDB" id="Q7RTS7"/>
<dbReference type="TreeFam" id="TF317854"/>
<dbReference type="PathwayCommons" id="Q7RTS7"/>
<dbReference type="Reactome" id="R-HSA-6805567">
    <property type="pathway name" value="Keratinization"/>
</dbReference>
<dbReference type="Reactome" id="R-HSA-6809371">
    <property type="pathway name" value="Formation of the cornified envelope"/>
</dbReference>
<dbReference type="SignaLink" id="Q7RTS7"/>
<dbReference type="BioGRID-ORCS" id="121391">
    <property type="hits" value="15 hits in 1137 CRISPR screens"/>
</dbReference>
<dbReference type="GenomeRNAi" id="121391"/>
<dbReference type="Pharos" id="Q7RTS7">
    <property type="development level" value="Tbio"/>
</dbReference>
<dbReference type="PRO" id="PR:Q7RTS7"/>
<dbReference type="Proteomes" id="UP000005640">
    <property type="component" value="Chromosome 12"/>
</dbReference>
<dbReference type="RNAct" id="Q7RTS7">
    <property type="molecule type" value="protein"/>
</dbReference>
<dbReference type="Bgee" id="ENSG00000170484">
    <property type="expression patterns" value="Expressed in upper arm skin and 41 other cell types or tissues"/>
</dbReference>
<dbReference type="ExpressionAtlas" id="Q7RTS7">
    <property type="expression patterns" value="baseline and differential"/>
</dbReference>
<dbReference type="GO" id="GO:0005737">
    <property type="term" value="C:cytoplasm"/>
    <property type="evidence" value="ECO:0000314"/>
    <property type="project" value="UniProtKB"/>
</dbReference>
<dbReference type="GO" id="GO:0005829">
    <property type="term" value="C:cytosol"/>
    <property type="evidence" value="ECO:0000304"/>
    <property type="project" value="Reactome"/>
</dbReference>
<dbReference type="GO" id="GO:0070062">
    <property type="term" value="C:extracellular exosome"/>
    <property type="evidence" value="ECO:0007005"/>
    <property type="project" value="UniProtKB"/>
</dbReference>
<dbReference type="GO" id="GO:0045095">
    <property type="term" value="C:keratin filament"/>
    <property type="evidence" value="ECO:0000318"/>
    <property type="project" value="GO_Central"/>
</dbReference>
<dbReference type="GO" id="GO:1990254">
    <property type="term" value="F:keratin filament binding"/>
    <property type="evidence" value="ECO:0000353"/>
    <property type="project" value="UniProtKB"/>
</dbReference>
<dbReference type="GO" id="GO:0030280">
    <property type="term" value="F:structural constituent of skin epidermis"/>
    <property type="evidence" value="ECO:0000318"/>
    <property type="project" value="GO_Central"/>
</dbReference>
<dbReference type="GO" id="GO:0045104">
    <property type="term" value="P:intermediate filament cytoskeleton organization"/>
    <property type="evidence" value="ECO:0000314"/>
    <property type="project" value="UniProtKB"/>
</dbReference>
<dbReference type="GO" id="GO:0045109">
    <property type="term" value="P:intermediate filament organization"/>
    <property type="evidence" value="ECO:0000318"/>
    <property type="project" value="GO_Central"/>
</dbReference>
<dbReference type="GO" id="GO:0031424">
    <property type="term" value="P:keratinization"/>
    <property type="evidence" value="ECO:0000318"/>
    <property type="project" value="GO_Central"/>
</dbReference>
<dbReference type="FunFam" id="1.20.5.1160:FF:000001">
    <property type="entry name" value="Keratin type II"/>
    <property type="match status" value="1"/>
</dbReference>
<dbReference type="FunFam" id="1.20.5.170:FF:000004">
    <property type="entry name" value="Keratin, type II cytoskeletal 5"/>
    <property type="match status" value="1"/>
</dbReference>
<dbReference type="FunFam" id="1.20.5.500:FF:000001">
    <property type="entry name" value="Type II keratin 23"/>
    <property type="match status" value="1"/>
</dbReference>
<dbReference type="Gene3D" id="1.20.5.170">
    <property type="match status" value="1"/>
</dbReference>
<dbReference type="Gene3D" id="1.20.5.500">
    <property type="entry name" value="Single helix bin"/>
    <property type="match status" value="1"/>
</dbReference>
<dbReference type="Gene3D" id="1.20.5.1160">
    <property type="entry name" value="Vasodilator-stimulated phosphoprotein"/>
    <property type="match status" value="1"/>
</dbReference>
<dbReference type="InterPro" id="IPR018039">
    <property type="entry name" value="IF_conserved"/>
</dbReference>
<dbReference type="InterPro" id="IPR039008">
    <property type="entry name" value="IF_rod_dom"/>
</dbReference>
<dbReference type="InterPro" id="IPR032444">
    <property type="entry name" value="Keratin_2_head"/>
</dbReference>
<dbReference type="InterPro" id="IPR003054">
    <property type="entry name" value="Keratin_II"/>
</dbReference>
<dbReference type="PANTHER" id="PTHR45616">
    <property type="entry name" value="GATA-TYPE DOMAIN-CONTAINING PROTEIN"/>
    <property type="match status" value="1"/>
</dbReference>
<dbReference type="PANTHER" id="PTHR45616:SF5">
    <property type="entry name" value="KERATIN, TYPE II CYTOSKELETAL 74"/>
    <property type="match status" value="1"/>
</dbReference>
<dbReference type="Pfam" id="PF00038">
    <property type="entry name" value="Filament"/>
    <property type="match status" value="1"/>
</dbReference>
<dbReference type="Pfam" id="PF16208">
    <property type="entry name" value="Keratin_2_head"/>
    <property type="match status" value="1"/>
</dbReference>
<dbReference type="PRINTS" id="PR01276">
    <property type="entry name" value="TYPE2KERATIN"/>
</dbReference>
<dbReference type="SMART" id="SM01391">
    <property type="entry name" value="Filament"/>
    <property type="match status" value="1"/>
</dbReference>
<dbReference type="SUPFAM" id="SSF64593">
    <property type="entry name" value="Intermediate filament protein, coiled coil region"/>
    <property type="match status" value="3"/>
</dbReference>
<dbReference type="PROSITE" id="PS00226">
    <property type="entry name" value="IF_ROD_1"/>
    <property type="match status" value="1"/>
</dbReference>
<dbReference type="PROSITE" id="PS51842">
    <property type="entry name" value="IF_ROD_2"/>
    <property type="match status" value="1"/>
</dbReference>
<accession>Q7RTS7</accession>
<accession>B5MD61</accession>
<accession>Q86Y45</accession>
<comment type="function">
    <text evidence="9">Has a role in hair formation. Specific component of keratin intermediate filaments in the inner root sheath (IRS) of the hair follicle (Probable).</text>
</comment>
<comment type="subunit">
    <text>Heterotetramer of two type I and two type II keratins.</text>
</comment>
<comment type="interaction">
    <interactant intactId="EBI-968660">
        <id>Q7RTS7</id>
    </interactant>
    <interactant intactId="EBI-1223876">
        <id>P13646</id>
        <label>KRT13</label>
    </interactant>
    <organismsDiffer>false</organismsDiffer>
    <experiments>3</experiments>
</comment>
<comment type="interaction">
    <interactant intactId="EBI-968660">
        <id>Q7RTS7</id>
    </interactant>
    <interactant intactId="EBI-739566">
        <id>P19012</id>
        <label>KRT15</label>
    </interactant>
    <organismsDiffer>false</organismsDiffer>
    <experiments>3</experiments>
</comment>
<comment type="interaction">
    <interactant intactId="EBI-968660">
        <id>Q7RTS7</id>
    </interactant>
    <interactant intactId="EBI-356410">
        <id>P08779</id>
        <label>KRT16</label>
    </interactant>
    <organismsDiffer>false</organismsDiffer>
    <experiments>3</experiments>
</comment>
<comment type="interaction">
    <interactant intactId="EBI-968660">
        <id>Q7RTS7</id>
    </interactant>
    <interactant intactId="EBI-742756">
        <id>P08727</id>
        <label>KRT19</label>
    </interactant>
    <organismsDiffer>false</organismsDiffer>
    <experiments>3</experiments>
</comment>
<comment type="interaction">
    <interactant intactId="EBI-968660">
        <id>Q7RTS7</id>
    </interactant>
    <interactant intactId="EBI-11980019">
        <id>Q7Z3Z0</id>
        <label>KRT25</label>
    </interactant>
    <organismsDiffer>false</organismsDiffer>
    <experiments>5</experiments>
</comment>
<comment type="interaction">
    <interactant intactId="EBI-968660">
        <id>Q7RTS7</id>
    </interactant>
    <interactant intactId="EBI-12084444">
        <id>Q7Z3Y9</id>
        <label>KRT26</label>
    </interactant>
    <organismsDiffer>false</organismsDiffer>
    <experiments>3</experiments>
</comment>
<comment type="interaction">
    <interactant intactId="EBI-968660">
        <id>Q7RTS7</id>
    </interactant>
    <interactant intactId="EBI-3044087">
        <id>Q7Z3Y8</id>
        <label>KRT27</label>
    </interactant>
    <organismsDiffer>false</organismsDiffer>
    <experiments>3</experiments>
</comment>
<comment type="interaction">
    <interactant intactId="EBI-968660">
        <id>Q7RTS7</id>
    </interactant>
    <interactant intactId="EBI-948001">
        <id>Q15323</id>
        <label>KRT31</label>
    </interactant>
    <organismsDiffer>false</organismsDiffer>
    <experiments>3</experiments>
</comment>
<comment type="interaction">
    <interactant intactId="EBI-968660">
        <id>Q7RTS7</id>
    </interactant>
    <interactant intactId="EBI-1047093">
        <id>O76011</id>
        <label>KRT34</label>
    </interactant>
    <organismsDiffer>false</organismsDiffer>
    <experiments>3</experiments>
</comment>
<comment type="interaction">
    <interactant intactId="EBI-968660">
        <id>Q7RTS7</id>
    </interactant>
    <interactant intactId="EBI-1058674">
        <id>Q92764</id>
        <label>KRT35</label>
    </interactant>
    <organismsDiffer>false</organismsDiffer>
    <experiments>3</experiments>
</comment>
<comment type="interaction">
    <interactant intactId="EBI-968660">
        <id>Q7RTS7</id>
    </interactant>
    <interactant intactId="EBI-1045716">
        <id>O76014</id>
        <label>KRT37</label>
    </interactant>
    <organismsDiffer>false</organismsDiffer>
    <experiments>7</experiments>
</comment>
<comment type="interaction">
    <interactant intactId="EBI-968660">
        <id>Q7RTS7</id>
    </interactant>
    <interactant intactId="EBI-1047263">
        <id>O76015</id>
        <label>KRT38</label>
    </interactant>
    <organismsDiffer>false</organismsDiffer>
    <experiments>3</experiments>
</comment>
<comment type="interaction">
    <interactant intactId="EBI-968660">
        <id>Q7RTS7</id>
    </interactant>
    <interactant intactId="EBI-11958242">
        <id>Q6A163</id>
        <label>KRT39</label>
    </interactant>
    <organismsDiffer>false</organismsDiffer>
    <experiments>3</experiments>
</comment>
<comment type="interaction">
    <interactant intactId="EBI-968660">
        <id>Q7RTS7</id>
    </interactant>
    <interactant intactId="EBI-2798728">
        <id>P61968</id>
        <label>LMO4</label>
    </interactant>
    <organismsDiffer>false</organismsDiffer>
    <experiments>3</experiments>
</comment>
<comment type="tissue specificity">
    <text evidence="4 5 8">Highly expressed in hair follicles from scalp. In hair, it is specifically present in the inner root sheath (IRS) of the hair follicle. Present in the IRS Huxley layer, but not in Henle layer or cuticle of the IRS. In the IRS Huxley layer, it is expressed in specialized Huxley cells, termed 'Fluegelzellen, along the area of differentiated Henle cells (at protein level).</text>
</comment>
<comment type="disease" evidence="6">
    <disease id="DI-02722">
        <name>Woolly hair autosomal dominant</name>
        <acronym>ADWH</acronym>
        <description>A hair shaft disorder characterized by fine and tightly curled hair. Compared to normal curly hair that is observed in some populations, woolly hair grows slowly and stops growing after a few inches. Under light microscopy, woolly hair shows some structural anomalies, including trichorrhexis nodosa and tapered ends.</description>
        <dbReference type="MIM" id="194300"/>
    </disease>
    <text>The disease is caused by variants affecting the gene represented in this entry.</text>
</comment>
<comment type="disease" evidence="7">
    <disease id="DI-03172">
        <name>Hypotrichosis 3</name>
        <acronym>HYPT3</acronym>
        <description>A condition characterized by the presence of less than the normal amount of hair. Affected individuals have normal hair in early childhood but experience progressive hair loss limited to the scalp beginning in the middle of the first decade and almost complete baldness by the third decade. Body hair, beard, eyebrows, axillary hair, teeth, and nails develop normally. HYPT3 inheritance is autosomal dominant.</description>
        <dbReference type="MIM" id="613981"/>
    </disease>
    <text>The disease is caused by variants affecting the gene represented in this entry.</text>
</comment>
<comment type="disease" evidence="8">
    <disease id="DI-04166">
        <name>Ectodermal dysplasia 7, hair/nail type</name>
        <acronym>ECTD7</acronym>
        <description>A form of ectodermal dysplasia, a heterogeneous group of disorders due to abnormal development of two or more ectodermal structures such as hair, teeth, nails and sweat glands, with or without any additional clinical sign. Each combination of clinical features represents a different type of ectodermal dysplasia. Ectodermal dysplasia of the hair/nail type is characterized by hypotrichosis and nail dystrophy without non-ectodermal or other ectodermal manifestations.</description>
        <dbReference type="MIM" id="614929"/>
    </disease>
    <text>The disease is caused by variants affecting the gene represented in this entry.</text>
</comment>
<comment type="miscellaneous">
    <text>There are two types of cytoskeletal and microfibrillar keratin, I (acidic) and II (neutral to basic) (40-55 and 56-70 kDa, respectively).</text>
</comment>
<comment type="similarity">
    <text evidence="1">Belongs to the intermediate filament family.</text>
</comment>
<comment type="sequence caution" evidence="9">
    <conflict type="erroneous gene model prediction">
        <sequence resource="EMBL-CDS" id="DAA00404"/>
    </conflict>
</comment>
<gene>
    <name type="primary">KRT74</name>
    <name type="synonym">K6IRS4</name>
    <name type="synonym">KB37</name>
    <name type="synonym">KRT5C</name>
    <name type="synonym">KRT6IRS4</name>
</gene>
<proteinExistence type="evidence at protein level"/>
<evidence type="ECO:0000255" key="1">
    <source>
        <dbReference type="PROSITE-ProRule" id="PRU01188"/>
    </source>
</evidence>
<evidence type="ECO:0000256" key="2">
    <source>
        <dbReference type="SAM" id="MobiDB-lite"/>
    </source>
</evidence>
<evidence type="ECO:0000269" key="3">
    <source>
    </source>
</evidence>
<evidence type="ECO:0000269" key="4">
    <source>
    </source>
</evidence>
<evidence type="ECO:0000269" key="5">
    <source>
    </source>
</evidence>
<evidence type="ECO:0000269" key="6">
    <source>
    </source>
</evidence>
<evidence type="ECO:0000269" key="7">
    <source>
    </source>
</evidence>
<evidence type="ECO:0000269" key="8">
    <source>
    </source>
</evidence>
<evidence type="ECO:0000305" key="9"/>
<evidence type="ECO:0007744" key="10">
    <source>
    </source>
</evidence>
<name>K2C74_HUMAN</name>
<feature type="chain" id="PRO_0000314885" description="Keratin, type II cytoskeletal 74">
    <location>
        <begin position="1"/>
        <end position="529"/>
    </location>
</feature>
<feature type="domain" description="IF rod" evidence="1">
    <location>
        <begin position="140"/>
        <end position="453"/>
    </location>
</feature>
<feature type="region of interest" description="Head">
    <location>
        <begin position="1"/>
        <end position="139"/>
    </location>
</feature>
<feature type="region of interest" description="Coil 1A">
    <location>
        <begin position="140"/>
        <end position="175"/>
    </location>
</feature>
<feature type="region of interest" description="Linker 1">
    <location>
        <begin position="176"/>
        <end position="194"/>
    </location>
</feature>
<feature type="region of interest" description="Coil 1B">
    <location>
        <begin position="195"/>
        <end position="286"/>
    </location>
</feature>
<feature type="region of interest" description="Linker 12">
    <location>
        <begin position="287"/>
        <end position="310"/>
    </location>
</feature>
<feature type="region of interest" description="Coil 2">
    <location>
        <begin position="311"/>
        <end position="449"/>
    </location>
</feature>
<feature type="region of interest" description="Tail">
    <location>
        <begin position="450"/>
        <end position="529"/>
    </location>
</feature>
<feature type="region of interest" description="Disordered" evidence="2">
    <location>
        <begin position="484"/>
        <end position="529"/>
    </location>
</feature>
<feature type="compositionally biased region" description="Low complexity" evidence="2">
    <location>
        <begin position="484"/>
        <end position="500"/>
    </location>
</feature>
<feature type="compositionally biased region" description="Basic and acidic residues" evidence="2">
    <location>
        <begin position="503"/>
        <end position="514"/>
    </location>
</feature>
<feature type="site" description="Stutter">
    <location>
        <position position="391"/>
    </location>
</feature>
<feature type="modified residue" description="Phosphothreonine" evidence="10">
    <location>
        <position position="513"/>
    </location>
</feature>
<feature type="sequence variant" id="VAR_063587" description="In ADWH; results in disruption of keratin intermediate filament formation in cultured cells; dbSNP:rs267607205." evidence="6">
    <original>N</original>
    <variation>K</variation>
    <location>
        <position position="148"/>
    </location>
</feature>
<feature type="sequence variant" id="VAR_038096" description="In dbSNP:rs11170177.">
    <original>N</original>
    <variation>K</variation>
    <location>
        <position position="165"/>
    </location>
</feature>
<feature type="sequence variant" id="VAR_049806" description="In dbSNP:rs11170176.">
    <original>L</original>
    <variation>Q</variation>
    <location>
        <position position="178"/>
    </location>
</feature>
<feature type="sequence variant" id="VAR_038097" description="In dbSNP:rs670741." evidence="3 4">
    <original>E</original>
    <variation>D</variation>
    <location>
        <position position="271"/>
    </location>
</feature>
<feature type="sequence variant" id="VAR_071383" description="In ECTD7; autosomal recessive; dbSNP:rs147962513." evidence="8">
    <original>F</original>
    <variation>S</variation>
    <location>
        <position position="274"/>
    </location>
</feature>
<feature type="sequence variant" id="VAR_061299" description="In dbSNP:rs57387512.">
    <original>R</original>
    <variation>Q</variation>
    <location>
        <position position="392"/>
    </location>
</feature>
<feature type="sequence variant" id="VAR_061300" description="In dbSNP:rs57711382.">
    <original>E</original>
    <variation>K</variation>
    <location>
        <position position="424"/>
    </location>
</feature>
<feature type="sequence variant" id="VAR_065951" description="In HYPT3; dbSNP:rs267607477." evidence="7">
    <original>D</original>
    <variation>N</variation>
    <location>
        <position position="482"/>
    </location>
</feature>